<keyword id="KW-0004">4Fe-4S</keyword>
<keyword id="KW-0150">Chloroplast</keyword>
<keyword id="KW-0408">Iron</keyword>
<keyword id="KW-0411">Iron-sulfur</keyword>
<keyword id="KW-0472">Membrane</keyword>
<keyword id="KW-0479">Metal-binding</keyword>
<keyword id="KW-0520">NAD</keyword>
<keyword id="KW-0521">NADP</keyword>
<keyword id="KW-0934">Plastid</keyword>
<keyword id="KW-0618">Plastoquinone</keyword>
<keyword id="KW-0874">Quinone</keyword>
<keyword id="KW-1185">Reference proteome</keyword>
<keyword id="KW-0677">Repeat</keyword>
<keyword id="KW-0793">Thylakoid</keyword>
<keyword id="KW-1278">Translocase</keyword>
<comment type="function">
    <text evidence="1">NDH shuttles electrons from NAD(P)H:plastoquinone, via FMN and iron-sulfur (Fe-S) centers, to quinones in the photosynthetic chain and possibly in a chloroplast respiratory chain. The immediate electron acceptor for the enzyme in this species is believed to be plastoquinone. Couples the redox reaction to proton translocation, and thus conserves the redox energy in a proton gradient.</text>
</comment>
<comment type="catalytic activity">
    <reaction evidence="1">
        <text>a plastoquinone + NADH + (n+1) H(+)(in) = a plastoquinol + NAD(+) + n H(+)(out)</text>
        <dbReference type="Rhea" id="RHEA:42608"/>
        <dbReference type="Rhea" id="RHEA-COMP:9561"/>
        <dbReference type="Rhea" id="RHEA-COMP:9562"/>
        <dbReference type="ChEBI" id="CHEBI:15378"/>
        <dbReference type="ChEBI" id="CHEBI:17757"/>
        <dbReference type="ChEBI" id="CHEBI:57540"/>
        <dbReference type="ChEBI" id="CHEBI:57945"/>
        <dbReference type="ChEBI" id="CHEBI:62192"/>
    </reaction>
</comment>
<comment type="catalytic activity">
    <reaction evidence="1">
        <text>a plastoquinone + NADPH + (n+1) H(+)(in) = a plastoquinol + NADP(+) + n H(+)(out)</text>
        <dbReference type="Rhea" id="RHEA:42612"/>
        <dbReference type="Rhea" id="RHEA-COMP:9561"/>
        <dbReference type="Rhea" id="RHEA-COMP:9562"/>
        <dbReference type="ChEBI" id="CHEBI:15378"/>
        <dbReference type="ChEBI" id="CHEBI:17757"/>
        <dbReference type="ChEBI" id="CHEBI:57783"/>
        <dbReference type="ChEBI" id="CHEBI:58349"/>
        <dbReference type="ChEBI" id="CHEBI:62192"/>
    </reaction>
</comment>
<comment type="cofactor">
    <cofactor evidence="1">
        <name>[4Fe-4S] cluster</name>
        <dbReference type="ChEBI" id="CHEBI:49883"/>
    </cofactor>
    <text evidence="1">Binds 2 [4Fe-4S] clusters per subunit.</text>
</comment>
<comment type="subunit">
    <text evidence="1">NDH is composed of at least 16 different subunits, 5 of which are encoded in the nucleus.</text>
</comment>
<comment type="subcellular location">
    <subcellularLocation>
        <location evidence="1">Plastid</location>
        <location evidence="1">Chloroplast thylakoid membrane</location>
        <topology evidence="1">Peripheral membrane protein</topology>
    </subcellularLocation>
</comment>
<comment type="similarity">
    <text evidence="1">Belongs to the complex I 23 kDa subunit family.</text>
</comment>
<name>NDHI_ORYSJ</name>
<reference key="1">
    <citation type="journal article" date="1989" name="Mol. Gen. Genet.">
        <title>The complete sequence of the rice (Oryza sativa) chloroplast genome: intermolecular recombination between distinct tRNA genes accounts for a major plastid DNA inversion during the evolution of the cereals.</title>
        <authorList>
            <person name="Hiratsuka J."/>
            <person name="Shimada H."/>
            <person name="Whittier R."/>
            <person name="Ishibashi T."/>
            <person name="Sakamoto M."/>
            <person name="Mori M."/>
            <person name="Kondo C."/>
            <person name="Honji Y."/>
            <person name="Sun C.-R."/>
            <person name="Meng B.-Y."/>
            <person name="Li Y.-Q."/>
            <person name="Kanno A."/>
            <person name="Nishizawa Y."/>
            <person name="Hirai A."/>
            <person name="Shinozaki K."/>
            <person name="Sugiura M."/>
        </authorList>
    </citation>
    <scope>NUCLEOTIDE SEQUENCE [LARGE SCALE GENOMIC DNA]</scope>
    <source>
        <strain>cv. Nipponbare</strain>
    </source>
</reference>
<reference key="2">
    <citation type="journal article" date="2004" name="Plant Physiol.">
        <title>A comparison of rice chloroplast genomes.</title>
        <authorList>
            <person name="Tang J."/>
            <person name="Xia H."/>
            <person name="Cao M."/>
            <person name="Zhang X."/>
            <person name="Zeng W."/>
            <person name="Hu S."/>
            <person name="Tong W."/>
            <person name="Wang J."/>
            <person name="Wang J."/>
            <person name="Yu J."/>
            <person name="Yang H."/>
            <person name="Zhu L."/>
        </authorList>
    </citation>
    <scope>NUCLEOTIDE SEQUENCE [LARGE SCALE GENOMIC DNA]</scope>
    <source>
        <strain>cv. Nipponbare</strain>
    </source>
</reference>
<evidence type="ECO:0000255" key="1">
    <source>
        <dbReference type="HAMAP-Rule" id="MF_01351"/>
    </source>
</evidence>
<evidence type="ECO:0000305" key="2"/>
<geneLocation type="chloroplast"/>
<dbReference type="EC" id="7.1.1.-" evidence="1"/>
<dbReference type="EMBL" id="X15901">
    <property type="protein sequence ID" value="CAA33909.1"/>
    <property type="molecule type" value="Genomic_DNA"/>
</dbReference>
<dbReference type="EMBL" id="AY522330">
    <property type="protein sequence ID" value="AAS46161.1"/>
    <property type="molecule type" value="Genomic_DNA"/>
</dbReference>
<dbReference type="PIR" id="JQ0294">
    <property type="entry name" value="FERZB"/>
</dbReference>
<dbReference type="RefSeq" id="NP_039448.1">
    <property type="nucleotide sequence ID" value="NC_001320.1"/>
</dbReference>
<dbReference type="SMR" id="P0C386"/>
<dbReference type="FunCoup" id="P0C386">
    <property type="interactions" value="159"/>
</dbReference>
<dbReference type="STRING" id="39947.P0C386"/>
<dbReference type="PaxDb" id="39947-P0C386"/>
<dbReference type="GeneID" id="3131488"/>
<dbReference type="KEGG" id="dosa:CAA33909.1"/>
<dbReference type="KEGG" id="osa:3131488"/>
<dbReference type="InParanoid" id="P0C386"/>
<dbReference type="OrthoDB" id="590178at2759"/>
<dbReference type="Proteomes" id="UP000059680">
    <property type="component" value="Chloroplast"/>
</dbReference>
<dbReference type="GO" id="GO:0009535">
    <property type="term" value="C:chloroplast thylakoid membrane"/>
    <property type="evidence" value="ECO:0007669"/>
    <property type="project" value="UniProtKB-SubCell"/>
</dbReference>
<dbReference type="GO" id="GO:0009536">
    <property type="term" value="C:plastid"/>
    <property type="evidence" value="ECO:0000305"/>
    <property type="project" value="Gramene"/>
</dbReference>
<dbReference type="GO" id="GO:0051539">
    <property type="term" value="F:4 iron, 4 sulfur cluster binding"/>
    <property type="evidence" value="ECO:0007669"/>
    <property type="project" value="UniProtKB-KW"/>
</dbReference>
<dbReference type="GO" id="GO:0005506">
    <property type="term" value="F:iron ion binding"/>
    <property type="evidence" value="ECO:0007669"/>
    <property type="project" value="UniProtKB-UniRule"/>
</dbReference>
<dbReference type="GO" id="GO:0008137">
    <property type="term" value="F:NADH dehydrogenase (ubiquinone) activity"/>
    <property type="evidence" value="ECO:0007669"/>
    <property type="project" value="InterPro"/>
</dbReference>
<dbReference type="GO" id="GO:0048038">
    <property type="term" value="F:quinone binding"/>
    <property type="evidence" value="ECO:0007669"/>
    <property type="project" value="UniProtKB-KW"/>
</dbReference>
<dbReference type="GO" id="GO:0019684">
    <property type="term" value="P:photosynthesis, light reaction"/>
    <property type="evidence" value="ECO:0007669"/>
    <property type="project" value="UniProtKB-UniRule"/>
</dbReference>
<dbReference type="Gene3D" id="3.30.70.3270">
    <property type="match status" value="1"/>
</dbReference>
<dbReference type="HAMAP" id="MF_01351">
    <property type="entry name" value="NDH1_NuoI"/>
    <property type="match status" value="1"/>
</dbReference>
<dbReference type="InterPro" id="IPR017896">
    <property type="entry name" value="4Fe4S_Fe-S-bd"/>
</dbReference>
<dbReference type="InterPro" id="IPR017900">
    <property type="entry name" value="4Fe4S_Fe_S_CS"/>
</dbReference>
<dbReference type="InterPro" id="IPR010226">
    <property type="entry name" value="NADH_quinone_OxRdtase_chainI"/>
</dbReference>
<dbReference type="InterPro" id="IPR004497">
    <property type="entry name" value="NDHI"/>
</dbReference>
<dbReference type="NCBIfam" id="TIGR00403">
    <property type="entry name" value="ndhI"/>
    <property type="match status" value="1"/>
</dbReference>
<dbReference type="NCBIfam" id="TIGR01971">
    <property type="entry name" value="NuoI"/>
    <property type="match status" value="1"/>
</dbReference>
<dbReference type="NCBIfam" id="NF004537">
    <property type="entry name" value="PRK05888.1-3"/>
    <property type="match status" value="1"/>
</dbReference>
<dbReference type="PANTHER" id="PTHR47275">
    <property type="entry name" value="NAD(P)H-QUINONE OXIDOREDUCTASE SUBUNIT I, CHLOROPLASTIC"/>
    <property type="match status" value="1"/>
</dbReference>
<dbReference type="PANTHER" id="PTHR47275:SF3">
    <property type="entry name" value="NAD(P)H-QUINONE OXIDOREDUCTASE SUBUNIT I, CHLOROPLASTIC"/>
    <property type="match status" value="1"/>
</dbReference>
<dbReference type="Pfam" id="PF13237">
    <property type="entry name" value="Fer4_10"/>
    <property type="match status" value="1"/>
</dbReference>
<dbReference type="SUPFAM" id="SSF54862">
    <property type="entry name" value="4Fe-4S ferredoxins"/>
    <property type="match status" value="1"/>
</dbReference>
<dbReference type="PROSITE" id="PS00198">
    <property type="entry name" value="4FE4S_FER_1"/>
    <property type="match status" value="2"/>
</dbReference>
<dbReference type="PROSITE" id="PS51379">
    <property type="entry name" value="4FE4S_FER_2"/>
    <property type="match status" value="2"/>
</dbReference>
<feature type="chain" id="PRO_0000289035" description="NAD(P)H-quinone oxidoreductase subunit I, chloroplastic">
    <location>
        <begin position="1"/>
        <end position="180"/>
    </location>
</feature>
<feature type="domain" description="4Fe-4S ferredoxin-type 1" evidence="1">
    <location>
        <begin position="55"/>
        <end position="84"/>
    </location>
</feature>
<feature type="domain" description="4Fe-4S ferredoxin-type 2" evidence="1">
    <location>
        <begin position="95"/>
        <end position="124"/>
    </location>
</feature>
<feature type="binding site" evidence="1">
    <location>
        <position position="64"/>
    </location>
    <ligand>
        <name>[4Fe-4S] cluster</name>
        <dbReference type="ChEBI" id="CHEBI:49883"/>
        <label>1</label>
    </ligand>
</feature>
<feature type="binding site" evidence="1">
    <location>
        <position position="67"/>
    </location>
    <ligand>
        <name>[4Fe-4S] cluster</name>
        <dbReference type="ChEBI" id="CHEBI:49883"/>
        <label>1</label>
    </ligand>
</feature>
<feature type="binding site" evidence="1">
    <location>
        <position position="70"/>
    </location>
    <ligand>
        <name>[4Fe-4S] cluster</name>
        <dbReference type="ChEBI" id="CHEBI:49883"/>
        <label>1</label>
    </ligand>
</feature>
<feature type="binding site" evidence="1">
    <location>
        <position position="74"/>
    </location>
    <ligand>
        <name>[4Fe-4S] cluster</name>
        <dbReference type="ChEBI" id="CHEBI:49883"/>
        <label>2</label>
    </ligand>
</feature>
<feature type="binding site" evidence="1">
    <location>
        <position position="104"/>
    </location>
    <ligand>
        <name>[4Fe-4S] cluster</name>
        <dbReference type="ChEBI" id="CHEBI:49883"/>
        <label>2</label>
    </ligand>
</feature>
<feature type="binding site" evidence="1">
    <location>
        <position position="107"/>
    </location>
    <ligand>
        <name>[4Fe-4S] cluster</name>
        <dbReference type="ChEBI" id="CHEBI:49883"/>
        <label>2</label>
    </ligand>
</feature>
<feature type="binding site" evidence="1">
    <location>
        <position position="110"/>
    </location>
    <ligand>
        <name>[4Fe-4S] cluster</name>
        <dbReference type="ChEBI" id="CHEBI:49883"/>
        <label>2</label>
    </ligand>
</feature>
<feature type="binding site" evidence="1">
    <location>
        <position position="114"/>
    </location>
    <ligand>
        <name>[4Fe-4S] cluster</name>
        <dbReference type="ChEBI" id="CHEBI:49883"/>
        <label>1</label>
    </ligand>
</feature>
<feature type="sequence conflict" description="In Ref. 1; CAA33909." evidence="2" ref="1">
    <location>
        <begin position="10"/>
        <end position="11"/>
    </location>
</feature>
<accession>P0C386</accession>
<accession>P12099</accession>
<accession>Q6QXX0</accession>
<accession>Q6QY33</accession>
<gene>
    <name evidence="1" type="primary">ndhI</name>
    <name type="synonym">frxB</name>
    <name type="ordered locus">LOC_Osp1g00950</name>
    <name type="ORF">Nip173</name>
</gene>
<organism>
    <name type="scientific">Oryza sativa subsp. japonica</name>
    <name type="common">Rice</name>
    <dbReference type="NCBI Taxonomy" id="39947"/>
    <lineage>
        <taxon>Eukaryota</taxon>
        <taxon>Viridiplantae</taxon>
        <taxon>Streptophyta</taxon>
        <taxon>Embryophyta</taxon>
        <taxon>Tracheophyta</taxon>
        <taxon>Spermatophyta</taxon>
        <taxon>Magnoliopsida</taxon>
        <taxon>Liliopsida</taxon>
        <taxon>Poales</taxon>
        <taxon>Poaceae</taxon>
        <taxon>BOP clade</taxon>
        <taxon>Oryzoideae</taxon>
        <taxon>Oryzeae</taxon>
        <taxon>Oryzinae</taxon>
        <taxon>Oryza</taxon>
        <taxon>Oryza sativa</taxon>
    </lineage>
</organism>
<protein>
    <recommendedName>
        <fullName evidence="1">NAD(P)H-quinone oxidoreductase subunit I, chloroplastic</fullName>
        <ecNumber evidence="1">7.1.1.-</ecNumber>
    </recommendedName>
    <alternativeName>
        <fullName evidence="1">NAD(P)H dehydrogenase subunit I</fullName>
        <shortName evidence="1">NDH subunit I</shortName>
    </alternativeName>
    <alternativeName>
        <fullName evidence="1">NADH-plastoquinone oxidoreductase subunit I</fullName>
    </alternativeName>
</protein>
<sequence length="180" mass="21165">MFPMVTGFMSYGQQTIRAARYIGQSFIITLSHTNRLPITIHYPYEKSITSERFRGRIHFEFDKCIACEVCVRVCPIDLPLVDWRFEKDIKRKQLLNYSIDFGVCIFCGNCVEYCPTNCLSMTEEYELSTYDRHELNYNQIALSRLPISIMGDYTIQTIRNSTQSKIDEEKSWNSRTITDY</sequence>
<proteinExistence type="inferred from homology"/>